<reference key="1">
    <citation type="journal article" date="2009" name="ChemBioChem">
        <title>Evolution of nacre: biochemistry and 'shellomics' of the shell organic matrix of the cephalopod Nautilus macromphalus.</title>
        <authorList>
            <person name="Marie B."/>
            <person name="Marin F."/>
            <person name="Marie A."/>
            <person name="Bedouet L."/>
            <person name="Dubost L."/>
            <person name="Alcaraz G."/>
            <person name="Milet C."/>
            <person name="Luquet G."/>
        </authorList>
    </citation>
    <scope>PROTEIN SEQUENCE</scope>
    <scope>TISSUE SPECIFICITY</scope>
    <source>
        <tissue>Shell</tissue>
    </source>
</reference>
<protein>
    <recommendedName>
        <fullName evidence="2">Uncharacterized protein IMPP6</fullName>
    </recommendedName>
</protein>
<keyword id="KW-0903">Direct protein sequencing</keyword>
<feature type="chain" id="PRO_0000371467" description="Uncharacterized protein IMPP6">
    <location>
        <begin position="1" status="less than"/>
        <end position="10" status="greater than"/>
    </location>
</feature>
<feature type="unsure residue" description="L or I" evidence="1">
    <location>
        <position position="6"/>
    </location>
</feature>
<feature type="non-terminal residue" evidence="2">
    <location>
        <position position="1"/>
    </location>
</feature>
<feature type="non-terminal residue" evidence="2">
    <location>
        <position position="10"/>
    </location>
</feature>
<comment type="tissue specificity">
    <text evidence="1">Nacreous layer of shell.</text>
</comment>
<sequence>SFSESLAAAR</sequence>
<accession>P85387</accession>
<organism>
    <name type="scientific">Nautilus macromphalus</name>
    <name type="common">Bellybutton nautilus</name>
    <dbReference type="NCBI Taxonomy" id="34576"/>
    <lineage>
        <taxon>Eukaryota</taxon>
        <taxon>Metazoa</taxon>
        <taxon>Spiralia</taxon>
        <taxon>Lophotrochozoa</taxon>
        <taxon>Mollusca</taxon>
        <taxon>Cephalopoda</taxon>
        <taxon>Nautiloidea</taxon>
        <taxon>Nautilida</taxon>
        <taxon>Nautilidae</taxon>
        <taxon>Nautilus</taxon>
    </lineage>
</organism>
<proteinExistence type="evidence at protein level"/>
<evidence type="ECO:0000269" key="1">
    <source>
    </source>
</evidence>
<evidence type="ECO:0000303" key="2">
    <source>
    </source>
</evidence>
<name>IMP06_NAUMA</name>